<comment type="function">
    <text evidence="1 6 7">Involved in the endoplasmic reticulum-associated degradation (ERAD) pathway that targets misfolded glycoproteins for degradation in an N-glycan-dependent manner (PubMed:15579471, PubMed:25655076). May initiate ERAD by promoting the first mannose trimming step of ERAD substrates, from Man9GlcNAc2 to Man8GlcNAc2 (By similarity). Seems to recognize and bind to exposed hydrophobic regions in target proteins (PubMed:25655076).</text>
</comment>
<comment type="subcellular location">
    <subcellularLocation>
        <location evidence="6">Endoplasmic reticulum lumen</location>
    </subcellularLocation>
</comment>
<comment type="induction">
    <text evidence="6">Up-regulated by the unfolded protein response (UPR) via the XBP1 transcription factor.</text>
</comment>
<comment type="PTM">
    <text evidence="6">N-glycosylated.</text>
</comment>
<comment type="similarity">
    <text evidence="4">Belongs to the glycosyl hydrolase 47 family.</text>
</comment>
<comment type="caution">
    <text evidence="1">Has similarity to alpha 1,2-mannosidases, but the catalytic activity of this protein is controversial. One study shows that it is important for a specific oligosaccharide trimming step from Man9GlcNAc2 to Man8GlcNAc2, suggesting activity as a mannosidase. However, another study reports that this protein has no mannosidase activity.</text>
</comment>
<proteinExistence type="evidence at protein level"/>
<sequence length="577" mass="64610">MPFRLLIPLGLVCVLLPLHHGAPGPDGTAPDPAHYRERVKAMFYHAYDSYLENAFPYDELRPLTCDGHDTWGSFSLTLIDALDTLLILGNTSEFQRVVEVLQDNVDFDIDVNASVFETNIRVVGGLLSAHLLSKKAGVEVEAGWPCSGPLLRMAEEAARKLLPAFQTPTGMPYGTVNLLHGVNPGETPVTCTAGIGTFIVEFATLSSLTGDPVFEDVARVALMRLWESRSDIGLVGNHIDVLTGKWVAQDAGIGAGVDSYFEYLVKGAILLQDKKLMAMFLEYNKAIRNYTHFDDWYLWVQMYKGTVSMPVFQSLEAYWPGLQSLIGDIDNAMRTFLNYYTVWKQFGGLPEFYNIPQGYTVEKREGYPLRPELIESAMYLYRATGDPTLLELGRDAVESIEKISKVECGFATIKDLRDHKLDNRMESFFLAETVKYLYLLFHPNNFIHNNGSTFDSVMTPHGECILGAGGYIFNTEAHPIDPAALHCCRRLKEEQWEVEDLIKEFYSLKQSRPKRAQRKTVRSGPWEPQSGPATLSSPANQPREKQPAQQRTPLLSCPSQPFTSKLALLGQVFLDSS</sequence>
<dbReference type="EMBL" id="AK075650">
    <property type="protein sequence ID" value="BAC35880.1"/>
    <property type="molecule type" value="mRNA"/>
</dbReference>
<dbReference type="EMBL" id="AK079296">
    <property type="protein sequence ID" value="BAC37599.1"/>
    <property type="molecule type" value="mRNA"/>
</dbReference>
<dbReference type="EMBL" id="AK080636">
    <property type="protein sequence ID" value="BAC37968.1"/>
    <property type="molecule type" value="mRNA"/>
</dbReference>
<dbReference type="EMBL" id="AK155024">
    <property type="protein sequence ID" value="BAE32997.1"/>
    <property type="molecule type" value="mRNA"/>
</dbReference>
<dbReference type="EMBL" id="AK166998">
    <property type="protein sequence ID" value="BAE39177.1"/>
    <property type="molecule type" value="mRNA"/>
</dbReference>
<dbReference type="EMBL" id="AL929233">
    <property type="status" value="NOT_ANNOTATED_CDS"/>
    <property type="molecule type" value="Genomic_DNA"/>
</dbReference>
<dbReference type="EMBL" id="CH466551">
    <property type="protein sequence ID" value="EDL06140.1"/>
    <property type="molecule type" value="Genomic_DNA"/>
</dbReference>
<dbReference type="EMBL" id="BC008268">
    <property type="protein sequence ID" value="AAH08268.1"/>
    <property type="molecule type" value="mRNA"/>
</dbReference>
<dbReference type="CCDS" id="CCDS16953.1"/>
<dbReference type="RefSeq" id="NP_663512.2">
    <property type="nucleotide sequence ID" value="NM_145537.2"/>
</dbReference>
<dbReference type="SMR" id="Q8BJT9"/>
<dbReference type="FunCoup" id="Q8BJT9">
    <property type="interactions" value="1270"/>
</dbReference>
<dbReference type="IntAct" id="Q8BJT9">
    <property type="interactions" value="8"/>
</dbReference>
<dbReference type="STRING" id="10090.ENSMUSP00000041202"/>
<dbReference type="CAZy" id="GH47">
    <property type="family name" value="Glycoside Hydrolase Family 47"/>
</dbReference>
<dbReference type="GlyCosmos" id="Q8BJT9">
    <property type="glycosylation" value="4 sites, No reported glycans"/>
</dbReference>
<dbReference type="GlyGen" id="Q8BJT9">
    <property type="glycosylation" value="4 sites"/>
</dbReference>
<dbReference type="PhosphoSitePlus" id="Q8BJT9"/>
<dbReference type="PaxDb" id="10090-ENSMUSP00000041202"/>
<dbReference type="ProteomicsDB" id="341187"/>
<dbReference type="Antibodypedia" id="25993">
    <property type="antibodies" value="143 antibodies from 29 providers"/>
</dbReference>
<dbReference type="DNASU" id="108687"/>
<dbReference type="Ensembl" id="ENSMUST00000040833.5">
    <property type="protein sequence ID" value="ENSMUSP00000041202.5"/>
    <property type="gene ID" value="ENSMUSG00000038312.11"/>
</dbReference>
<dbReference type="GeneID" id="108687"/>
<dbReference type="KEGG" id="mmu:108687"/>
<dbReference type="UCSC" id="uc008nlg.2">
    <property type="organism name" value="mouse"/>
</dbReference>
<dbReference type="AGR" id="MGI:1915540"/>
<dbReference type="CTD" id="55741"/>
<dbReference type="MGI" id="MGI:1915540">
    <property type="gene designation" value="Edem2"/>
</dbReference>
<dbReference type="VEuPathDB" id="HostDB:ENSMUSG00000038312"/>
<dbReference type="eggNOG" id="KOG2429">
    <property type="taxonomic scope" value="Eukaryota"/>
</dbReference>
<dbReference type="GeneTree" id="ENSGT00940000159233"/>
<dbReference type="HOGENOM" id="CLU_003818_5_4_1"/>
<dbReference type="InParanoid" id="Q8BJT9"/>
<dbReference type="OMA" id="HNYHRVW"/>
<dbReference type="OrthoDB" id="8118055at2759"/>
<dbReference type="PhylomeDB" id="Q8BJT9"/>
<dbReference type="TreeFam" id="TF300807"/>
<dbReference type="BioGRID-ORCS" id="108687">
    <property type="hits" value="5 hits in 78 CRISPR screens"/>
</dbReference>
<dbReference type="ChiTaRS" id="Edem2">
    <property type="organism name" value="mouse"/>
</dbReference>
<dbReference type="PRO" id="PR:Q8BJT9"/>
<dbReference type="Proteomes" id="UP000000589">
    <property type="component" value="Chromosome 2"/>
</dbReference>
<dbReference type="RNAct" id="Q8BJT9">
    <property type="molecule type" value="protein"/>
</dbReference>
<dbReference type="Bgee" id="ENSMUSG00000038312">
    <property type="expression patterns" value="Expressed in lacrimal gland and 242 other cell types or tissues"/>
</dbReference>
<dbReference type="GO" id="GO:0005783">
    <property type="term" value="C:endoplasmic reticulum"/>
    <property type="evidence" value="ECO:0000266"/>
    <property type="project" value="MGI"/>
</dbReference>
<dbReference type="GO" id="GO:0005788">
    <property type="term" value="C:endoplasmic reticulum lumen"/>
    <property type="evidence" value="ECO:0007669"/>
    <property type="project" value="UniProtKB-SubCell"/>
</dbReference>
<dbReference type="GO" id="GO:0044322">
    <property type="term" value="C:endoplasmic reticulum quality control compartment"/>
    <property type="evidence" value="ECO:0007669"/>
    <property type="project" value="GOC"/>
</dbReference>
<dbReference type="GO" id="GO:0016020">
    <property type="term" value="C:membrane"/>
    <property type="evidence" value="ECO:0007669"/>
    <property type="project" value="InterPro"/>
</dbReference>
<dbReference type="GO" id="GO:0005509">
    <property type="term" value="F:calcium ion binding"/>
    <property type="evidence" value="ECO:0007669"/>
    <property type="project" value="InterPro"/>
</dbReference>
<dbReference type="GO" id="GO:0004571">
    <property type="term" value="F:mannosyl-oligosaccharide 1,2-alpha-mannosidase activity"/>
    <property type="evidence" value="ECO:0007669"/>
    <property type="project" value="Ensembl"/>
</dbReference>
<dbReference type="GO" id="GO:0005975">
    <property type="term" value="P:carbohydrate metabolic process"/>
    <property type="evidence" value="ECO:0007669"/>
    <property type="project" value="InterPro"/>
</dbReference>
<dbReference type="GO" id="GO:1904380">
    <property type="term" value="P:endoplasmic reticulum mannose trimming"/>
    <property type="evidence" value="ECO:0007669"/>
    <property type="project" value="InterPro"/>
</dbReference>
<dbReference type="GO" id="GO:0036503">
    <property type="term" value="P:ERAD pathway"/>
    <property type="evidence" value="ECO:0007669"/>
    <property type="project" value="Ensembl"/>
</dbReference>
<dbReference type="GO" id="GO:0006058">
    <property type="term" value="P:mannoprotein catabolic process"/>
    <property type="evidence" value="ECO:0007669"/>
    <property type="project" value="Ensembl"/>
</dbReference>
<dbReference type="GO" id="GO:1904154">
    <property type="term" value="P:positive regulation of retrograde protein transport, ER to cytosol"/>
    <property type="evidence" value="ECO:0000314"/>
    <property type="project" value="ParkinsonsUK-UCL"/>
</dbReference>
<dbReference type="GO" id="GO:0006986">
    <property type="term" value="P:response to unfolded protein"/>
    <property type="evidence" value="ECO:0007669"/>
    <property type="project" value="UniProtKB-KW"/>
</dbReference>
<dbReference type="FunFam" id="1.50.10.10:FF:000015">
    <property type="entry name" value="alpha-1,2-Mannosidase"/>
    <property type="match status" value="1"/>
</dbReference>
<dbReference type="Gene3D" id="1.50.10.10">
    <property type="match status" value="1"/>
</dbReference>
<dbReference type="InterPro" id="IPR012341">
    <property type="entry name" value="6hp_glycosidase-like_sf"/>
</dbReference>
<dbReference type="InterPro" id="IPR044674">
    <property type="entry name" value="EDEM1/2/3"/>
</dbReference>
<dbReference type="InterPro" id="IPR001382">
    <property type="entry name" value="Glyco_hydro_47"/>
</dbReference>
<dbReference type="InterPro" id="IPR036026">
    <property type="entry name" value="Seven-hairpin_glycosidases"/>
</dbReference>
<dbReference type="PANTHER" id="PTHR45679">
    <property type="entry name" value="ER DEGRADATION-ENHANCING ALPHA-MANNOSIDASE-LIKE PROTEIN 2"/>
    <property type="match status" value="1"/>
</dbReference>
<dbReference type="PANTHER" id="PTHR45679:SF6">
    <property type="entry name" value="ER DEGRADATION-ENHANCING ALPHA-MANNOSIDASE-LIKE PROTEIN 2"/>
    <property type="match status" value="1"/>
</dbReference>
<dbReference type="Pfam" id="PF01532">
    <property type="entry name" value="Glyco_hydro_47"/>
    <property type="match status" value="1"/>
</dbReference>
<dbReference type="PRINTS" id="PR00747">
    <property type="entry name" value="GLYHDRLASE47"/>
</dbReference>
<dbReference type="SUPFAM" id="SSF48225">
    <property type="entry name" value="Seven-hairpin glycosidases"/>
    <property type="match status" value="1"/>
</dbReference>
<name>EDEM2_MOUSE</name>
<reference evidence="11" key="1">
    <citation type="journal article" date="2005" name="Science">
        <title>The transcriptional landscape of the mammalian genome.</title>
        <authorList>
            <person name="Carninci P."/>
            <person name="Kasukawa T."/>
            <person name="Katayama S."/>
            <person name="Gough J."/>
            <person name="Frith M.C."/>
            <person name="Maeda N."/>
            <person name="Oyama R."/>
            <person name="Ravasi T."/>
            <person name="Lenhard B."/>
            <person name="Wells C."/>
            <person name="Kodzius R."/>
            <person name="Shimokawa K."/>
            <person name="Bajic V.B."/>
            <person name="Brenner S.E."/>
            <person name="Batalov S."/>
            <person name="Forrest A.R."/>
            <person name="Zavolan M."/>
            <person name="Davis M.J."/>
            <person name="Wilming L.G."/>
            <person name="Aidinis V."/>
            <person name="Allen J.E."/>
            <person name="Ambesi-Impiombato A."/>
            <person name="Apweiler R."/>
            <person name="Aturaliya R.N."/>
            <person name="Bailey T.L."/>
            <person name="Bansal M."/>
            <person name="Baxter L."/>
            <person name="Beisel K.W."/>
            <person name="Bersano T."/>
            <person name="Bono H."/>
            <person name="Chalk A.M."/>
            <person name="Chiu K.P."/>
            <person name="Choudhary V."/>
            <person name="Christoffels A."/>
            <person name="Clutterbuck D.R."/>
            <person name="Crowe M.L."/>
            <person name="Dalla E."/>
            <person name="Dalrymple B.P."/>
            <person name="de Bono B."/>
            <person name="Della Gatta G."/>
            <person name="di Bernardo D."/>
            <person name="Down T."/>
            <person name="Engstrom P."/>
            <person name="Fagiolini M."/>
            <person name="Faulkner G."/>
            <person name="Fletcher C.F."/>
            <person name="Fukushima T."/>
            <person name="Furuno M."/>
            <person name="Futaki S."/>
            <person name="Gariboldi M."/>
            <person name="Georgii-Hemming P."/>
            <person name="Gingeras T.R."/>
            <person name="Gojobori T."/>
            <person name="Green R.E."/>
            <person name="Gustincich S."/>
            <person name="Harbers M."/>
            <person name="Hayashi Y."/>
            <person name="Hensch T.K."/>
            <person name="Hirokawa N."/>
            <person name="Hill D."/>
            <person name="Huminiecki L."/>
            <person name="Iacono M."/>
            <person name="Ikeo K."/>
            <person name="Iwama A."/>
            <person name="Ishikawa T."/>
            <person name="Jakt M."/>
            <person name="Kanapin A."/>
            <person name="Katoh M."/>
            <person name="Kawasawa Y."/>
            <person name="Kelso J."/>
            <person name="Kitamura H."/>
            <person name="Kitano H."/>
            <person name="Kollias G."/>
            <person name="Krishnan S.P."/>
            <person name="Kruger A."/>
            <person name="Kummerfeld S.K."/>
            <person name="Kurochkin I.V."/>
            <person name="Lareau L.F."/>
            <person name="Lazarevic D."/>
            <person name="Lipovich L."/>
            <person name="Liu J."/>
            <person name="Liuni S."/>
            <person name="McWilliam S."/>
            <person name="Madan Babu M."/>
            <person name="Madera M."/>
            <person name="Marchionni L."/>
            <person name="Matsuda H."/>
            <person name="Matsuzawa S."/>
            <person name="Miki H."/>
            <person name="Mignone F."/>
            <person name="Miyake S."/>
            <person name="Morris K."/>
            <person name="Mottagui-Tabar S."/>
            <person name="Mulder N."/>
            <person name="Nakano N."/>
            <person name="Nakauchi H."/>
            <person name="Ng P."/>
            <person name="Nilsson R."/>
            <person name="Nishiguchi S."/>
            <person name="Nishikawa S."/>
            <person name="Nori F."/>
            <person name="Ohara O."/>
            <person name="Okazaki Y."/>
            <person name="Orlando V."/>
            <person name="Pang K.C."/>
            <person name="Pavan W.J."/>
            <person name="Pavesi G."/>
            <person name="Pesole G."/>
            <person name="Petrovsky N."/>
            <person name="Piazza S."/>
            <person name="Reed J."/>
            <person name="Reid J.F."/>
            <person name="Ring B.Z."/>
            <person name="Ringwald M."/>
            <person name="Rost B."/>
            <person name="Ruan Y."/>
            <person name="Salzberg S.L."/>
            <person name="Sandelin A."/>
            <person name="Schneider C."/>
            <person name="Schoenbach C."/>
            <person name="Sekiguchi K."/>
            <person name="Semple C.A."/>
            <person name="Seno S."/>
            <person name="Sessa L."/>
            <person name="Sheng Y."/>
            <person name="Shibata Y."/>
            <person name="Shimada H."/>
            <person name="Shimada K."/>
            <person name="Silva D."/>
            <person name="Sinclair B."/>
            <person name="Sperling S."/>
            <person name="Stupka E."/>
            <person name="Sugiura K."/>
            <person name="Sultana R."/>
            <person name="Takenaka Y."/>
            <person name="Taki K."/>
            <person name="Tammoja K."/>
            <person name="Tan S.L."/>
            <person name="Tang S."/>
            <person name="Taylor M.S."/>
            <person name="Tegner J."/>
            <person name="Teichmann S.A."/>
            <person name="Ueda H.R."/>
            <person name="van Nimwegen E."/>
            <person name="Verardo R."/>
            <person name="Wei C.L."/>
            <person name="Yagi K."/>
            <person name="Yamanishi H."/>
            <person name="Zabarovsky E."/>
            <person name="Zhu S."/>
            <person name="Zimmer A."/>
            <person name="Hide W."/>
            <person name="Bult C."/>
            <person name="Grimmond S.M."/>
            <person name="Teasdale R.D."/>
            <person name="Liu E.T."/>
            <person name="Brusic V."/>
            <person name="Quackenbush J."/>
            <person name="Wahlestedt C."/>
            <person name="Mattick J.S."/>
            <person name="Hume D.A."/>
            <person name="Kai C."/>
            <person name="Sasaki D."/>
            <person name="Tomaru Y."/>
            <person name="Fukuda S."/>
            <person name="Kanamori-Katayama M."/>
            <person name="Suzuki M."/>
            <person name="Aoki J."/>
            <person name="Arakawa T."/>
            <person name="Iida J."/>
            <person name="Imamura K."/>
            <person name="Itoh M."/>
            <person name="Kato T."/>
            <person name="Kawaji H."/>
            <person name="Kawagashira N."/>
            <person name="Kawashima T."/>
            <person name="Kojima M."/>
            <person name="Kondo S."/>
            <person name="Konno H."/>
            <person name="Nakano K."/>
            <person name="Ninomiya N."/>
            <person name="Nishio T."/>
            <person name="Okada M."/>
            <person name="Plessy C."/>
            <person name="Shibata K."/>
            <person name="Shiraki T."/>
            <person name="Suzuki S."/>
            <person name="Tagami M."/>
            <person name="Waki K."/>
            <person name="Watahiki A."/>
            <person name="Okamura-Oho Y."/>
            <person name="Suzuki H."/>
            <person name="Kawai J."/>
            <person name="Hayashizaki Y."/>
        </authorList>
    </citation>
    <scope>NUCLEOTIDE SEQUENCE [LARGE SCALE MRNA]</scope>
    <source>
        <strain>C57BL/6J</strain>
        <strain>NOD</strain>
        <tissue>Urinary bladder</tissue>
    </source>
</reference>
<reference key="2">
    <citation type="journal article" date="2009" name="PLoS Biol.">
        <title>Lineage-specific biology revealed by a finished genome assembly of the mouse.</title>
        <authorList>
            <person name="Church D.M."/>
            <person name="Goodstadt L."/>
            <person name="Hillier L.W."/>
            <person name="Zody M.C."/>
            <person name="Goldstein S."/>
            <person name="She X."/>
            <person name="Bult C.J."/>
            <person name="Agarwala R."/>
            <person name="Cherry J.L."/>
            <person name="DiCuccio M."/>
            <person name="Hlavina W."/>
            <person name="Kapustin Y."/>
            <person name="Meric P."/>
            <person name="Maglott D."/>
            <person name="Birtle Z."/>
            <person name="Marques A.C."/>
            <person name="Graves T."/>
            <person name="Zhou S."/>
            <person name="Teague B."/>
            <person name="Potamousis K."/>
            <person name="Churas C."/>
            <person name="Place M."/>
            <person name="Herschleb J."/>
            <person name="Runnheim R."/>
            <person name="Forrest D."/>
            <person name="Amos-Landgraf J."/>
            <person name="Schwartz D.C."/>
            <person name="Cheng Z."/>
            <person name="Lindblad-Toh K."/>
            <person name="Eichler E.E."/>
            <person name="Ponting C.P."/>
        </authorList>
    </citation>
    <scope>NUCLEOTIDE SEQUENCE [LARGE SCALE GENOMIC DNA]</scope>
    <source>
        <strain>C57BL/6J</strain>
    </source>
</reference>
<reference evidence="12" key="3">
    <citation type="submission" date="2005-07" db="EMBL/GenBank/DDBJ databases">
        <authorList>
            <person name="Mural R.J."/>
            <person name="Adams M.D."/>
            <person name="Myers E.W."/>
            <person name="Smith H.O."/>
            <person name="Venter J.C."/>
        </authorList>
    </citation>
    <scope>NUCLEOTIDE SEQUENCE [LARGE SCALE GENOMIC DNA]</scope>
</reference>
<reference evidence="10" key="4">
    <citation type="journal article" date="2004" name="Genome Res.">
        <title>The status, quality, and expansion of the NIH full-length cDNA project: the Mammalian Gene Collection (MGC).</title>
        <authorList>
            <consortium name="The MGC Project Team"/>
        </authorList>
    </citation>
    <scope>NUCLEOTIDE SEQUENCE [LARGE SCALE MRNA]</scope>
    <source>
        <tissue evidence="10">Mammary tumor</tissue>
    </source>
</reference>
<reference evidence="9" key="5">
    <citation type="journal article" date="2005" name="J. Biol. Chem.">
        <title>A novel stress-induced EDEM variant regulating endoplasmic reticulum-associated glycoprotein degradation.</title>
        <authorList>
            <person name="Olivari S."/>
            <person name="Galli C."/>
            <person name="Alanen H."/>
            <person name="Ruddock L."/>
            <person name="Molinari M."/>
        </authorList>
    </citation>
    <scope>FUNCTION</scope>
    <scope>SUBCELLULAR LOCATION</scope>
    <scope>INDUCTION</scope>
    <scope>GLYCOSYLATION</scope>
</reference>
<reference evidence="9" key="6">
    <citation type="journal article" date="2015" name="BMC Cell Biol.">
        <title>Hydrophobicity of protein determinants influences the recognition of substrates by EDEM1 and EDEM2 in human cells.</title>
        <authorList>
            <person name="Sokolowska I."/>
            <person name="Pilka E.S."/>
            <person name="Sandvig K."/>
            <person name="Wegrzyn G."/>
            <person name="Slominska-Wojewodzka M."/>
        </authorList>
    </citation>
    <scope>FUNCTION</scope>
</reference>
<protein>
    <recommendedName>
        <fullName evidence="8">ER degradation-enhancing alpha-mannosidase-like protein 2</fullName>
    </recommendedName>
</protein>
<organism evidence="11">
    <name type="scientific">Mus musculus</name>
    <name type="common">Mouse</name>
    <dbReference type="NCBI Taxonomy" id="10090"/>
    <lineage>
        <taxon>Eukaryota</taxon>
        <taxon>Metazoa</taxon>
        <taxon>Chordata</taxon>
        <taxon>Craniata</taxon>
        <taxon>Vertebrata</taxon>
        <taxon>Euteleostomi</taxon>
        <taxon>Mammalia</taxon>
        <taxon>Eutheria</taxon>
        <taxon>Euarchontoglires</taxon>
        <taxon>Glires</taxon>
        <taxon>Rodentia</taxon>
        <taxon>Myomorpha</taxon>
        <taxon>Muroidea</taxon>
        <taxon>Muridae</taxon>
        <taxon>Murinae</taxon>
        <taxon>Mus</taxon>
        <taxon>Mus</taxon>
    </lineage>
</organism>
<keyword id="KW-0256">Endoplasmic reticulum</keyword>
<keyword id="KW-0325">Glycoprotein</keyword>
<keyword id="KW-1185">Reference proteome</keyword>
<keyword id="KW-0732">Signal</keyword>
<keyword id="KW-0834">Unfolded protein response</keyword>
<accession>Q8BJT9</accession>
<accession>Q8BJR2</accession>
<accession>Q8BK85</accession>
<accession>Q91VV3</accession>
<evidence type="ECO:0000250" key="1">
    <source>
        <dbReference type="UniProtKB" id="Q9BV94"/>
    </source>
</evidence>
<evidence type="ECO:0000255" key="2"/>
<evidence type="ECO:0000255" key="3">
    <source>
        <dbReference type="PROSITE-ProRule" id="PRU00498"/>
    </source>
</evidence>
<evidence type="ECO:0000255" key="4">
    <source>
        <dbReference type="RuleBase" id="RU361193"/>
    </source>
</evidence>
<evidence type="ECO:0000256" key="5">
    <source>
        <dbReference type="SAM" id="MobiDB-lite"/>
    </source>
</evidence>
<evidence type="ECO:0000269" key="6">
    <source>
    </source>
</evidence>
<evidence type="ECO:0000269" key="7">
    <source>
    </source>
</evidence>
<evidence type="ECO:0000303" key="8">
    <source>
    </source>
</evidence>
<evidence type="ECO:0000305" key="9"/>
<evidence type="ECO:0000312" key="10">
    <source>
        <dbReference type="EMBL" id="AAH08268.1"/>
    </source>
</evidence>
<evidence type="ECO:0000312" key="11">
    <source>
        <dbReference type="EMBL" id="BAC37599.1"/>
    </source>
</evidence>
<evidence type="ECO:0000312" key="12">
    <source>
        <dbReference type="EMBL" id="EDL06140.1"/>
    </source>
</evidence>
<evidence type="ECO:0000312" key="13">
    <source>
        <dbReference type="MGI" id="MGI:1915540"/>
    </source>
</evidence>
<gene>
    <name evidence="8 13" type="primary">Edem2</name>
</gene>
<feature type="signal peptide" evidence="2">
    <location>
        <begin position="1"/>
        <end position="21"/>
    </location>
</feature>
<feature type="chain" id="PRO_5014588821" description="ER degradation-enhancing alpha-mannosidase-like protein 2">
    <location>
        <begin position="22"/>
        <end position="577"/>
    </location>
</feature>
<feature type="region of interest" description="Disordered" evidence="5">
    <location>
        <begin position="513"/>
        <end position="561"/>
    </location>
</feature>
<feature type="compositionally biased region" description="Polar residues" evidence="5">
    <location>
        <begin position="531"/>
        <end position="540"/>
    </location>
</feature>
<feature type="compositionally biased region" description="Polar residues" evidence="5">
    <location>
        <begin position="547"/>
        <end position="561"/>
    </location>
</feature>
<feature type="glycosylation site" description="N-linked (GlcNAc...) asparagine" evidence="2 3">
    <location>
        <position position="90"/>
    </location>
</feature>
<feature type="glycosylation site" description="N-linked (GlcNAc...) asparagine" evidence="3">
    <location>
        <position position="112"/>
    </location>
</feature>
<feature type="glycosylation site" description="N-linked (GlcNAc...) asparagine" evidence="3">
    <location>
        <position position="289"/>
    </location>
</feature>
<feature type="glycosylation site" description="N-linked (GlcNAc...) asparagine" evidence="3">
    <location>
        <position position="450"/>
    </location>
</feature>
<feature type="sequence conflict" description="In Ref. 1; BAC37968." evidence="9" ref="1">
    <original>F</original>
    <variation>L</variation>
    <location>
        <position position="505"/>
    </location>
</feature>
<feature type="sequence conflict" description="In Ref. 4; AAH08268." evidence="9" ref="4">
    <original>S</original>
    <variation>F</variation>
    <location>
        <position position="536"/>
    </location>
</feature>
<feature type="sequence conflict" description="In Ref. 4; AAH08268." evidence="9" ref="4">
    <original>Q</original>
    <variation>R</variation>
    <location>
        <position position="549"/>
    </location>
</feature>
<feature type="sequence conflict" description="In Ref. 1; BAC35880." evidence="9" ref="1">
    <original>L</original>
    <variation>V</variation>
    <location>
        <position position="554"/>
    </location>
</feature>